<proteinExistence type="inferred from homology"/>
<gene>
    <name type="ordered locus">CLI_3063</name>
</gene>
<comment type="similarity">
    <text evidence="1">Belongs to the UPF0735 family.</text>
</comment>
<evidence type="ECO:0000255" key="1">
    <source>
        <dbReference type="HAMAP-Rule" id="MF_00707"/>
    </source>
</evidence>
<organism>
    <name type="scientific">Clostridium botulinum (strain Langeland / NCTC 10281 / Type F)</name>
    <dbReference type="NCBI Taxonomy" id="441772"/>
    <lineage>
        <taxon>Bacteria</taxon>
        <taxon>Bacillati</taxon>
        <taxon>Bacillota</taxon>
        <taxon>Clostridia</taxon>
        <taxon>Eubacteriales</taxon>
        <taxon>Clostridiaceae</taxon>
        <taxon>Clostridium</taxon>
    </lineage>
</organism>
<sequence length="145" mass="16173">MPNKFLIIDNSILPDIFEKVVKVKELLANGKVKDITEGVKTVGISRSTYYKYKDFVFSVSEGVKSQKATIGLLLGHERGTLSKILDRIAEYQGNILTINQDIPINNTANVSITFDISQMSIGLKELVEEIKNTKNVIKVDLIAME</sequence>
<accession>A7GHM5</accession>
<dbReference type="EMBL" id="CP000728">
    <property type="protein sequence ID" value="ABS41388.1"/>
    <property type="molecule type" value="Genomic_DNA"/>
</dbReference>
<dbReference type="RefSeq" id="WP_003357848.1">
    <property type="nucleotide sequence ID" value="NC_009699.1"/>
</dbReference>
<dbReference type="KEGG" id="cbf:CLI_3063"/>
<dbReference type="HOGENOM" id="CLU_128147_0_0_9"/>
<dbReference type="Proteomes" id="UP000002410">
    <property type="component" value="Chromosome"/>
</dbReference>
<dbReference type="CDD" id="cd04888">
    <property type="entry name" value="ACT_PheB-BS"/>
    <property type="match status" value="1"/>
</dbReference>
<dbReference type="Gene3D" id="3.30.70.260">
    <property type="match status" value="1"/>
</dbReference>
<dbReference type="HAMAP" id="MF_00707">
    <property type="entry name" value="UPF0735"/>
    <property type="match status" value="1"/>
</dbReference>
<dbReference type="InterPro" id="IPR045865">
    <property type="entry name" value="ACT-like_dom_sf"/>
</dbReference>
<dbReference type="InterPro" id="IPR002912">
    <property type="entry name" value="ACT_dom"/>
</dbReference>
<dbReference type="InterPro" id="IPR008310">
    <property type="entry name" value="UPF0735_ACT_dom-cont"/>
</dbReference>
<dbReference type="NCBIfam" id="NF003361">
    <property type="entry name" value="PRK04435.1"/>
    <property type="match status" value="1"/>
</dbReference>
<dbReference type="Pfam" id="PF13291">
    <property type="entry name" value="ACT_4"/>
    <property type="match status" value="1"/>
</dbReference>
<dbReference type="PIRSF" id="PIRSF025624">
    <property type="entry name" value="ACT_PheB"/>
    <property type="match status" value="1"/>
</dbReference>
<dbReference type="SUPFAM" id="SSF55021">
    <property type="entry name" value="ACT-like"/>
    <property type="match status" value="1"/>
</dbReference>
<dbReference type="PROSITE" id="PS51671">
    <property type="entry name" value="ACT"/>
    <property type="match status" value="1"/>
</dbReference>
<feature type="chain" id="PRO_0000366302" description="UPF0735 ACT domain-containing protein CLI_3063">
    <location>
        <begin position="1"/>
        <end position="145"/>
    </location>
</feature>
<feature type="domain" description="ACT" evidence="1">
    <location>
        <begin position="69"/>
        <end position="144"/>
    </location>
</feature>
<name>Y3063_CLOBL</name>
<reference key="1">
    <citation type="submission" date="2007-06" db="EMBL/GenBank/DDBJ databases">
        <authorList>
            <person name="Brinkac L.M."/>
            <person name="Daugherty S."/>
            <person name="Dodson R.J."/>
            <person name="Madupu R."/>
            <person name="Brown J.L."/>
            <person name="Bruce D."/>
            <person name="Detter C."/>
            <person name="Munk C."/>
            <person name="Smith L.A."/>
            <person name="Smith T.J."/>
            <person name="White O."/>
            <person name="Brettin T.S."/>
        </authorList>
    </citation>
    <scope>NUCLEOTIDE SEQUENCE [LARGE SCALE GENOMIC DNA]</scope>
    <source>
        <strain>Langeland / NCTC 10281 / Type F</strain>
    </source>
</reference>
<protein>
    <recommendedName>
        <fullName evidence="1">UPF0735 ACT domain-containing protein CLI_3063</fullName>
    </recommendedName>
</protein>